<dbReference type="EC" id="2.6.1.11" evidence="1"/>
<dbReference type="EMBL" id="AE016853">
    <property type="protein sequence ID" value="AAO55351.1"/>
    <property type="molecule type" value="Genomic_DNA"/>
</dbReference>
<dbReference type="RefSeq" id="NP_791656.1">
    <property type="nucleotide sequence ID" value="NC_004578.1"/>
</dbReference>
<dbReference type="RefSeq" id="WP_011103718.1">
    <property type="nucleotide sequence ID" value="NC_004578.1"/>
</dbReference>
<dbReference type="SMR" id="Q885K0"/>
<dbReference type="STRING" id="223283.PSPTO_1832"/>
<dbReference type="KEGG" id="pst:PSPTO_1832"/>
<dbReference type="PATRIC" id="fig|223283.9.peg.1862"/>
<dbReference type="eggNOG" id="COG4992">
    <property type="taxonomic scope" value="Bacteria"/>
</dbReference>
<dbReference type="HOGENOM" id="CLU_016922_10_1_6"/>
<dbReference type="OrthoDB" id="9801052at2"/>
<dbReference type="PhylomeDB" id="Q885K0"/>
<dbReference type="UniPathway" id="UPA00068">
    <property type="reaction ID" value="UER00109"/>
</dbReference>
<dbReference type="Proteomes" id="UP000002515">
    <property type="component" value="Chromosome"/>
</dbReference>
<dbReference type="GO" id="GO:0005737">
    <property type="term" value="C:cytoplasm"/>
    <property type="evidence" value="ECO:0007669"/>
    <property type="project" value="UniProtKB-SubCell"/>
</dbReference>
<dbReference type="GO" id="GO:0042802">
    <property type="term" value="F:identical protein binding"/>
    <property type="evidence" value="ECO:0007669"/>
    <property type="project" value="TreeGrafter"/>
</dbReference>
<dbReference type="GO" id="GO:0003992">
    <property type="term" value="F:N2-acetyl-L-ornithine:2-oxoglutarate 5-aminotransferase activity"/>
    <property type="evidence" value="ECO:0007669"/>
    <property type="project" value="UniProtKB-UniRule"/>
</dbReference>
<dbReference type="GO" id="GO:0030170">
    <property type="term" value="F:pyridoxal phosphate binding"/>
    <property type="evidence" value="ECO:0007669"/>
    <property type="project" value="InterPro"/>
</dbReference>
<dbReference type="GO" id="GO:0006526">
    <property type="term" value="P:L-arginine biosynthetic process"/>
    <property type="evidence" value="ECO:0007669"/>
    <property type="project" value="UniProtKB-UniRule"/>
</dbReference>
<dbReference type="CDD" id="cd00610">
    <property type="entry name" value="OAT_like"/>
    <property type="match status" value="1"/>
</dbReference>
<dbReference type="FunFam" id="3.40.640.10:FF:000004">
    <property type="entry name" value="Acetylornithine aminotransferase"/>
    <property type="match status" value="1"/>
</dbReference>
<dbReference type="Gene3D" id="3.90.1150.10">
    <property type="entry name" value="Aspartate Aminotransferase, domain 1"/>
    <property type="match status" value="1"/>
</dbReference>
<dbReference type="Gene3D" id="3.40.640.10">
    <property type="entry name" value="Type I PLP-dependent aspartate aminotransferase-like (Major domain)"/>
    <property type="match status" value="1"/>
</dbReference>
<dbReference type="HAMAP" id="MF_01107">
    <property type="entry name" value="ArgD_aminotrans_3"/>
    <property type="match status" value="1"/>
</dbReference>
<dbReference type="InterPro" id="IPR017652">
    <property type="entry name" value="Ac/SucOrn_transaminase_bac"/>
</dbReference>
<dbReference type="InterPro" id="IPR004636">
    <property type="entry name" value="AcOrn/SuccOrn_fam"/>
</dbReference>
<dbReference type="InterPro" id="IPR005814">
    <property type="entry name" value="Aminotrans_3"/>
</dbReference>
<dbReference type="InterPro" id="IPR049704">
    <property type="entry name" value="Aminotrans_3_PPA_site"/>
</dbReference>
<dbReference type="InterPro" id="IPR050103">
    <property type="entry name" value="Class-III_PLP-dep_AT"/>
</dbReference>
<dbReference type="InterPro" id="IPR015424">
    <property type="entry name" value="PyrdxlP-dep_Trfase"/>
</dbReference>
<dbReference type="InterPro" id="IPR015421">
    <property type="entry name" value="PyrdxlP-dep_Trfase_major"/>
</dbReference>
<dbReference type="InterPro" id="IPR015422">
    <property type="entry name" value="PyrdxlP-dep_Trfase_small"/>
</dbReference>
<dbReference type="NCBIfam" id="TIGR03246">
    <property type="entry name" value="arg_catab_astC"/>
    <property type="match status" value="1"/>
</dbReference>
<dbReference type="NCBIfam" id="TIGR00707">
    <property type="entry name" value="argD"/>
    <property type="match status" value="1"/>
</dbReference>
<dbReference type="NCBIfam" id="NF002325">
    <property type="entry name" value="PRK01278.1"/>
    <property type="match status" value="1"/>
</dbReference>
<dbReference type="NCBIfam" id="NF003468">
    <property type="entry name" value="PRK05093.1"/>
    <property type="match status" value="1"/>
</dbReference>
<dbReference type="NCBIfam" id="NF009047">
    <property type="entry name" value="PRK12381.1"/>
    <property type="match status" value="1"/>
</dbReference>
<dbReference type="PANTHER" id="PTHR11986">
    <property type="entry name" value="AMINOTRANSFERASE CLASS III"/>
    <property type="match status" value="1"/>
</dbReference>
<dbReference type="PANTHER" id="PTHR11986:SF113">
    <property type="entry name" value="SUCCINYLORNITHINE TRANSAMINASE"/>
    <property type="match status" value="1"/>
</dbReference>
<dbReference type="Pfam" id="PF00202">
    <property type="entry name" value="Aminotran_3"/>
    <property type="match status" value="1"/>
</dbReference>
<dbReference type="PIRSF" id="PIRSF000521">
    <property type="entry name" value="Transaminase_4ab_Lys_Orn"/>
    <property type="match status" value="1"/>
</dbReference>
<dbReference type="SUPFAM" id="SSF53383">
    <property type="entry name" value="PLP-dependent transferases"/>
    <property type="match status" value="1"/>
</dbReference>
<dbReference type="PROSITE" id="PS00600">
    <property type="entry name" value="AA_TRANSFER_CLASS_3"/>
    <property type="match status" value="1"/>
</dbReference>
<feature type="chain" id="PRO_0000112770" description="Acetylornithine aminotransferase 1">
    <location>
        <begin position="1"/>
        <end position="405"/>
    </location>
</feature>
<feature type="binding site" evidence="1">
    <location>
        <begin position="108"/>
        <end position="109"/>
    </location>
    <ligand>
        <name>pyridoxal 5'-phosphate</name>
        <dbReference type="ChEBI" id="CHEBI:597326"/>
    </ligand>
</feature>
<feature type="binding site" evidence="1">
    <location>
        <position position="141"/>
    </location>
    <ligand>
        <name>pyridoxal 5'-phosphate</name>
        <dbReference type="ChEBI" id="CHEBI:597326"/>
    </ligand>
</feature>
<feature type="binding site" evidence="1">
    <location>
        <position position="144"/>
    </location>
    <ligand>
        <name>N(2)-acetyl-L-ornithine</name>
        <dbReference type="ChEBI" id="CHEBI:57805"/>
    </ligand>
</feature>
<feature type="binding site" evidence="1">
    <location>
        <begin position="226"/>
        <end position="229"/>
    </location>
    <ligand>
        <name>pyridoxal 5'-phosphate</name>
        <dbReference type="ChEBI" id="CHEBI:597326"/>
    </ligand>
</feature>
<feature type="binding site" evidence="1">
    <location>
        <position position="283"/>
    </location>
    <ligand>
        <name>N(2)-acetyl-L-ornithine</name>
        <dbReference type="ChEBI" id="CHEBI:57805"/>
    </ligand>
</feature>
<feature type="binding site" evidence="1">
    <location>
        <position position="284"/>
    </location>
    <ligand>
        <name>pyridoxal 5'-phosphate</name>
        <dbReference type="ChEBI" id="CHEBI:597326"/>
    </ligand>
</feature>
<feature type="modified residue" description="N6-(pyridoxal phosphate)lysine" evidence="1">
    <location>
        <position position="255"/>
    </location>
</feature>
<gene>
    <name evidence="1" type="primary">argD1</name>
    <name type="ordered locus">PSPTO_1832</name>
</gene>
<sequence length="405" mass="43432">MSVEHAAVQRADFDQVMVPNYAPAGFIPVRGAGSRVWDQAGRELVDFSGGIAVNVLGHCHPALVGALTEQANNLWHVSNVFTNEPTLRLAKKLVDSTFAERVFFCNSGAEANEAAFKLARRVAHDLYGPEKYEIIAAVNSFHGRTLFTVSVGGQPKYSDGFGPKITGISHVPYNDLEALKAAVTDKTCAVVLEPIQGEGGVLPGELDYLQGARKLCDEHNALLVFDEVQSGMGRSGHLFAYMHYGVTPDILSSAKSIGGGFPLAAMLTTEKLAKHFAVGVHGTTYGGNPLACAVGEAVIDVINTPEVLAGVQRKHQQFKTRLESIGQQYGVFTEVRGLGLLIGCVLSDAWKGKAKDIFNAAEAQDLMILQAGPDVIRFAPSLVIEDADIEEGLNRFERAIAKLTS</sequence>
<evidence type="ECO:0000255" key="1">
    <source>
        <dbReference type="HAMAP-Rule" id="MF_01107"/>
    </source>
</evidence>
<protein>
    <recommendedName>
        <fullName evidence="1">Acetylornithine aminotransferase 1</fullName>
        <shortName evidence="1">ACOAT 1</shortName>
        <ecNumber evidence="1">2.6.1.11</ecNumber>
    </recommendedName>
</protein>
<keyword id="KW-0028">Amino-acid biosynthesis</keyword>
<keyword id="KW-0032">Aminotransferase</keyword>
<keyword id="KW-0055">Arginine biosynthesis</keyword>
<keyword id="KW-0963">Cytoplasm</keyword>
<keyword id="KW-0663">Pyridoxal phosphate</keyword>
<keyword id="KW-1185">Reference proteome</keyword>
<keyword id="KW-0808">Transferase</keyword>
<name>ARGD1_PSESM</name>
<comment type="catalytic activity">
    <reaction evidence="1">
        <text>N(2)-acetyl-L-ornithine + 2-oxoglutarate = N-acetyl-L-glutamate 5-semialdehyde + L-glutamate</text>
        <dbReference type="Rhea" id="RHEA:18049"/>
        <dbReference type="ChEBI" id="CHEBI:16810"/>
        <dbReference type="ChEBI" id="CHEBI:29123"/>
        <dbReference type="ChEBI" id="CHEBI:29985"/>
        <dbReference type="ChEBI" id="CHEBI:57805"/>
        <dbReference type="EC" id="2.6.1.11"/>
    </reaction>
</comment>
<comment type="cofactor">
    <cofactor evidence="1">
        <name>pyridoxal 5'-phosphate</name>
        <dbReference type="ChEBI" id="CHEBI:597326"/>
    </cofactor>
    <text evidence="1">Binds 1 pyridoxal phosphate per subunit.</text>
</comment>
<comment type="pathway">
    <text evidence="1">Amino-acid biosynthesis; L-arginine biosynthesis; N(2)-acetyl-L-ornithine from L-glutamate: step 4/4.</text>
</comment>
<comment type="subunit">
    <text evidence="1">Homodimer.</text>
</comment>
<comment type="subcellular location">
    <subcellularLocation>
        <location evidence="1">Cytoplasm</location>
    </subcellularLocation>
</comment>
<comment type="miscellaneous">
    <text evidence="1">May also have succinyldiaminopimelate aminotransferase activity, thus carrying out the corresponding step in lysine biosynthesis.</text>
</comment>
<comment type="similarity">
    <text evidence="1">Belongs to the class-III pyridoxal-phosphate-dependent aminotransferase family. ArgD subfamily.</text>
</comment>
<proteinExistence type="inferred from homology"/>
<reference key="1">
    <citation type="journal article" date="2003" name="Proc. Natl. Acad. Sci. U.S.A.">
        <title>The complete genome sequence of the Arabidopsis and tomato pathogen Pseudomonas syringae pv. tomato DC3000.</title>
        <authorList>
            <person name="Buell C.R."/>
            <person name="Joardar V."/>
            <person name="Lindeberg M."/>
            <person name="Selengut J."/>
            <person name="Paulsen I.T."/>
            <person name="Gwinn M.L."/>
            <person name="Dodson R.J."/>
            <person name="DeBoy R.T."/>
            <person name="Durkin A.S."/>
            <person name="Kolonay J.F."/>
            <person name="Madupu R."/>
            <person name="Daugherty S.C."/>
            <person name="Brinkac L.M."/>
            <person name="Beanan M.J."/>
            <person name="Haft D.H."/>
            <person name="Nelson W.C."/>
            <person name="Davidsen T.M."/>
            <person name="Zafar N."/>
            <person name="Zhou L."/>
            <person name="Liu J."/>
            <person name="Yuan Q."/>
            <person name="Khouri H.M."/>
            <person name="Fedorova N.B."/>
            <person name="Tran B."/>
            <person name="Russell D."/>
            <person name="Berry K.J."/>
            <person name="Utterback T.R."/>
            <person name="Van Aken S.E."/>
            <person name="Feldblyum T.V."/>
            <person name="D'Ascenzo M."/>
            <person name="Deng W.-L."/>
            <person name="Ramos A.R."/>
            <person name="Alfano J.R."/>
            <person name="Cartinhour S."/>
            <person name="Chatterjee A.K."/>
            <person name="Delaney T.P."/>
            <person name="Lazarowitz S.G."/>
            <person name="Martin G.B."/>
            <person name="Schneider D.J."/>
            <person name="Tang X."/>
            <person name="Bender C.L."/>
            <person name="White O."/>
            <person name="Fraser C.M."/>
            <person name="Collmer A."/>
        </authorList>
    </citation>
    <scope>NUCLEOTIDE SEQUENCE [LARGE SCALE GENOMIC DNA]</scope>
    <source>
        <strain>ATCC BAA-871 / DC3000</strain>
    </source>
</reference>
<accession>Q885K0</accession>
<organism>
    <name type="scientific">Pseudomonas syringae pv. tomato (strain ATCC BAA-871 / DC3000)</name>
    <dbReference type="NCBI Taxonomy" id="223283"/>
    <lineage>
        <taxon>Bacteria</taxon>
        <taxon>Pseudomonadati</taxon>
        <taxon>Pseudomonadota</taxon>
        <taxon>Gammaproteobacteria</taxon>
        <taxon>Pseudomonadales</taxon>
        <taxon>Pseudomonadaceae</taxon>
        <taxon>Pseudomonas</taxon>
    </lineage>
</organism>